<feature type="chain" id="PRO_0000381448" description="Biotin synthase">
    <location>
        <begin position="1"/>
        <end position="351"/>
    </location>
</feature>
<feature type="domain" description="Radical SAM core" evidence="2">
    <location>
        <begin position="48"/>
        <end position="265"/>
    </location>
</feature>
<feature type="binding site" evidence="1">
    <location>
        <position position="63"/>
    </location>
    <ligand>
        <name>[4Fe-4S] cluster</name>
        <dbReference type="ChEBI" id="CHEBI:49883"/>
        <note>4Fe-4S-S-AdoMet</note>
    </ligand>
</feature>
<feature type="binding site" evidence="1">
    <location>
        <position position="67"/>
    </location>
    <ligand>
        <name>[4Fe-4S] cluster</name>
        <dbReference type="ChEBI" id="CHEBI:49883"/>
        <note>4Fe-4S-S-AdoMet</note>
    </ligand>
</feature>
<feature type="binding site" evidence="1">
    <location>
        <position position="70"/>
    </location>
    <ligand>
        <name>[4Fe-4S] cluster</name>
        <dbReference type="ChEBI" id="CHEBI:49883"/>
        <note>4Fe-4S-S-AdoMet</note>
    </ligand>
</feature>
<feature type="binding site" evidence="1">
    <location>
        <position position="107"/>
    </location>
    <ligand>
        <name>[2Fe-2S] cluster</name>
        <dbReference type="ChEBI" id="CHEBI:190135"/>
    </ligand>
</feature>
<feature type="binding site" evidence="1">
    <location>
        <position position="139"/>
    </location>
    <ligand>
        <name>[2Fe-2S] cluster</name>
        <dbReference type="ChEBI" id="CHEBI:190135"/>
    </ligand>
</feature>
<feature type="binding site" evidence="1">
    <location>
        <position position="199"/>
    </location>
    <ligand>
        <name>[2Fe-2S] cluster</name>
        <dbReference type="ChEBI" id="CHEBI:190135"/>
    </ligand>
</feature>
<feature type="binding site" evidence="1">
    <location>
        <position position="269"/>
    </location>
    <ligand>
        <name>[2Fe-2S] cluster</name>
        <dbReference type="ChEBI" id="CHEBI:190135"/>
    </ligand>
</feature>
<gene>
    <name evidence="1" type="primary">bioB</name>
    <name type="ordered locus">LA_2143</name>
</gene>
<accession>Q8F498</accession>
<protein>
    <recommendedName>
        <fullName evidence="1">Biotin synthase</fullName>
        <ecNumber evidence="1">2.8.1.6</ecNumber>
    </recommendedName>
</protein>
<proteinExistence type="inferred from homology"/>
<keyword id="KW-0001">2Fe-2S</keyword>
<keyword id="KW-0004">4Fe-4S</keyword>
<keyword id="KW-0093">Biotin biosynthesis</keyword>
<keyword id="KW-0408">Iron</keyword>
<keyword id="KW-0411">Iron-sulfur</keyword>
<keyword id="KW-0479">Metal-binding</keyword>
<keyword id="KW-1185">Reference proteome</keyword>
<keyword id="KW-0949">S-adenosyl-L-methionine</keyword>
<keyword id="KW-0808">Transferase</keyword>
<name>BIOB_LEPIN</name>
<organism>
    <name type="scientific">Leptospira interrogans serogroup Icterohaemorrhagiae serovar Lai (strain 56601)</name>
    <dbReference type="NCBI Taxonomy" id="189518"/>
    <lineage>
        <taxon>Bacteria</taxon>
        <taxon>Pseudomonadati</taxon>
        <taxon>Spirochaetota</taxon>
        <taxon>Spirochaetia</taxon>
        <taxon>Leptospirales</taxon>
        <taxon>Leptospiraceae</taxon>
        <taxon>Leptospira</taxon>
    </lineage>
</organism>
<sequence>MLKTSEKIFSETPSIITKEEGLKILNGVIPLTTCLDKAFQERNRYFENKVRIHILDNIKNGYCPEDCGYCAQRKNANSGVQEYPMKSEQEIYEDAVQAKKNGAYRFCMVTSGTGPNRLTTEKLASTIQRITDELNMKVCLSAGLLDIEKAQVLKEAGLDRYNHNLNTSENHYSEICDTHTYLQRTQTLDSVSKAGIGMCSGVIVGMGESFQDIVDVAFQLKSFRVISIPVNFFIPVKGHTIKNPSVLTPELCVRILCMFRLINPDSEIRIAAGREGHLRSLSATALFAANSLFSSGYLNVKGSEILETVAMIRDAGFVPELSNGEILPENFGTESFYSEKNFPELYKFKKF</sequence>
<dbReference type="EC" id="2.8.1.6" evidence="1"/>
<dbReference type="EMBL" id="AE010300">
    <property type="protein sequence ID" value="AAN49342.2"/>
    <property type="molecule type" value="Genomic_DNA"/>
</dbReference>
<dbReference type="RefSeq" id="NP_712324.2">
    <property type="nucleotide sequence ID" value="NC_004342.2"/>
</dbReference>
<dbReference type="RefSeq" id="WP_002111813.1">
    <property type="nucleotide sequence ID" value="NC_004342.2"/>
</dbReference>
<dbReference type="SMR" id="Q8F498"/>
<dbReference type="FunCoup" id="Q8F498">
    <property type="interactions" value="325"/>
</dbReference>
<dbReference type="STRING" id="189518.LA_2143"/>
<dbReference type="PaxDb" id="189518-LA_2143"/>
<dbReference type="EnsemblBacteria" id="AAN49342">
    <property type="protein sequence ID" value="AAN49342"/>
    <property type="gene ID" value="LA_2143"/>
</dbReference>
<dbReference type="KEGG" id="lil:LA_2143"/>
<dbReference type="PATRIC" id="fig|189518.3.peg.2134"/>
<dbReference type="HOGENOM" id="CLU_033172_2_1_12"/>
<dbReference type="InParanoid" id="Q8F498"/>
<dbReference type="OrthoDB" id="9786826at2"/>
<dbReference type="UniPathway" id="UPA00078">
    <property type="reaction ID" value="UER00162"/>
</dbReference>
<dbReference type="Proteomes" id="UP000001408">
    <property type="component" value="Chromosome I"/>
</dbReference>
<dbReference type="GO" id="GO:0051537">
    <property type="term" value="F:2 iron, 2 sulfur cluster binding"/>
    <property type="evidence" value="ECO:0000318"/>
    <property type="project" value="GO_Central"/>
</dbReference>
<dbReference type="GO" id="GO:0051539">
    <property type="term" value="F:4 iron, 4 sulfur cluster binding"/>
    <property type="evidence" value="ECO:0007669"/>
    <property type="project" value="UniProtKB-KW"/>
</dbReference>
<dbReference type="GO" id="GO:0004076">
    <property type="term" value="F:biotin synthase activity"/>
    <property type="evidence" value="ECO:0000318"/>
    <property type="project" value="GO_Central"/>
</dbReference>
<dbReference type="GO" id="GO:0005506">
    <property type="term" value="F:iron ion binding"/>
    <property type="evidence" value="ECO:0007669"/>
    <property type="project" value="UniProtKB-UniRule"/>
</dbReference>
<dbReference type="GO" id="GO:0009102">
    <property type="term" value="P:biotin biosynthetic process"/>
    <property type="evidence" value="ECO:0000318"/>
    <property type="project" value="GO_Central"/>
</dbReference>
<dbReference type="CDD" id="cd01335">
    <property type="entry name" value="Radical_SAM"/>
    <property type="match status" value="1"/>
</dbReference>
<dbReference type="FunFam" id="3.20.20.70:FF:000026">
    <property type="entry name" value="Biotin synthase"/>
    <property type="match status" value="1"/>
</dbReference>
<dbReference type="Gene3D" id="3.20.20.70">
    <property type="entry name" value="Aldolase class I"/>
    <property type="match status" value="1"/>
</dbReference>
<dbReference type="HAMAP" id="MF_01694">
    <property type="entry name" value="BioB"/>
    <property type="match status" value="1"/>
</dbReference>
<dbReference type="InterPro" id="IPR013785">
    <property type="entry name" value="Aldolase_TIM"/>
</dbReference>
<dbReference type="InterPro" id="IPR010722">
    <property type="entry name" value="BATS_dom"/>
</dbReference>
<dbReference type="InterPro" id="IPR002684">
    <property type="entry name" value="Biotin_synth/BioAB"/>
</dbReference>
<dbReference type="InterPro" id="IPR024177">
    <property type="entry name" value="Biotin_synthase"/>
</dbReference>
<dbReference type="InterPro" id="IPR006638">
    <property type="entry name" value="Elp3/MiaA/NifB-like_rSAM"/>
</dbReference>
<dbReference type="InterPro" id="IPR007197">
    <property type="entry name" value="rSAM"/>
</dbReference>
<dbReference type="NCBIfam" id="TIGR00433">
    <property type="entry name" value="bioB"/>
    <property type="match status" value="1"/>
</dbReference>
<dbReference type="PANTHER" id="PTHR22976">
    <property type="entry name" value="BIOTIN SYNTHASE"/>
    <property type="match status" value="1"/>
</dbReference>
<dbReference type="PANTHER" id="PTHR22976:SF2">
    <property type="entry name" value="BIOTIN SYNTHASE, MITOCHONDRIAL"/>
    <property type="match status" value="1"/>
</dbReference>
<dbReference type="Pfam" id="PF06968">
    <property type="entry name" value="BATS"/>
    <property type="match status" value="1"/>
</dbReference>
<dbReference type="Pfam" id="PF04055">
    <property type="entry name" value="Radical_SAM"/>
    <property type="match status" value="1"/>
</dbReference>
<dbReference type="PIRSF" id="PIRSF001619">
    <property type="entry name" value="Biotin_synth"/>
    <property type="match status" value="1"/>
</dbReference>
<dbReference type="SFLD" id="SFLDG01278">
    <property type="entry name" value="biotin_synthase_like"/>
    <property type="match status" value="1"/>
</dbReference>
<dbReference type="SFLD" id="SFLDS00029">
    <property type="entry name" value="Radical_SAM"/>
    <property type="match status" value="1"/>
</dbReference>
<dbReference type="SMART" id="SM00876">
    <property type="entry name" value="BATS"/>
    <property type="match status" value="1"/>
</dbReference>
<dbReference type="SMART" id="SM00729">
    <property type="entry name" value="Elp3"/>
    <property type="match status" value="1"/>
</dbReference>
<dbReference type="SUPFAM" id="SSF102114">
    <property type="entry name" value="Radical SAM enzymes"/>
    <property type="match status" value="1"/>
</dbReference>
<dbReference type="PROSITE" id="PS51918">
    <property type="entry name" value="RADICAL_SAM"/>
    <property type="match status" value="1"/>
</dbReference>
<comment type="function">
    <text evidence="1">Catalyzes the conversion of dethiobiotin (DTB) to biotin by the insertion of a sulfur atom into dethiobiotin via a radical-based mechanism.</text>
</comment>
<comment type="catalytic activity">
    <reaction evidence="1">
        <text>(4R,5S)-dethiobiotin + (sulfur carrier)-SH + 2 reduced [2Fe-2S]-[ferredoxin] + 2 S-adenosyl-L-methionine = (sulfur carrier)-H + biotin + 2 5'-deoxyadenosine + 2 L-methionine + 2 oxidized [2Fe-2S]-[ferredoxin]</text>
        <dbReference type="Rhea" id="RHEA:22060"/>
        <dbReference type="Rhea" id="RHEA-COMP:10000"/>
        <dbReference type="Rhea" id="RHEA-COMP:10001"/>
        <dbReference type="Rhea" id="RHEA-COMP:14737"/>
        <dbReference type="Rhea" id="RHEA-COMP:14739"/>
        <dbReference type="ChEBI" id="CHEBI:17319"/>
        <dbReference type="ChEBI" id="CHEBI:29917"/>
        <dbReference type="ChEBI" id="CHEBI:33737"/>
        <dbReference type="ChEBI" id="CHEBI:33738"/>
        <dbReference type="ChEBI" id="CHEBI:57586"/>
        <dbReference type="ChEBI" id="CHEBI:57844"/>
        <dbReference type="ChEBI" id="CHEBI:59789"/>
        <dbReference type="ChEBI" id="CHEBI:64428"/>
        <dbReference type="ChEBI" id="CHEBI:149473"/>
        <dbReference type="EC" id="2.8.1.6"/>
    </reaction>
</comment>
<comment type="cofactor">
    <cofactor evidence="1">
        <name>[4Fe-4S] cluster</name>
        <dbReference type="ChEBI" id="CHEBI:49883"/>
    </cofactor>
    <text evidence="1">Binds 1 [4Fe-4S] cluster. The cluster is coordinated with 3 cysteines and an exchangeable S-adenosyl-L-methionine.</text>
</comment>
<comment type="cofactor">
    <cofactor evidence="1">
        <name>[2Fe-2S] cluster</name>
        <dbReference type="ChEBI" id="CHEBI:190135"/>
    </cofactor>
    <text evidence="1">Binds 1 [2Fe-2S] cluster. The cluster is coordinated with 3 cysteines and 1 arginine.</text>
</comment>
<comment type="pathway">
    <text evidence="1">Cofactor biosynthesis; biotin biosynthesis; biotin from 7,8-diaminononanoate: step 2/2.</text>
</comment>
<comment type="subunit">
    <text evidence="1">Homodimer.</text>
</comment>
<comment type="similarity">
    <text evidence="1">Belongs to the radical SAM superfamily. Biotin synthase family.</text>
</comment>
<reference key="1">
    <citation type="journal article" date="2003" name="Nature">
        <title>Unique physiological and pathogenic features of Leptospira interrogans revealed by whole-genome sequencing.</title>
        <authorList>
            <person name="Ren S.-X."/>
            <person name="Fu G."/>
            <person name="Jiang X.-G."/>
            <person name="Zeng R."/>
            <person name="Miao Y.-G."/>
            <person name="Xu H."/>
            <person name="Zhang Y.-X."/>
            <person name="Xiong H."/>
            <person name="Lu G."/>
            <person name="Lu L.-F."/>
            <person name="Jiang H.-Q."/>
            <person name="Jia J."/>
            <person name="Tu Y.-F."/>
            <person name="Jiang J.-X."/>
            <person name="Gu W.-Y."/>
            <person name="Zhang Y.-Q."/>
            <person name="Cai Z."/>
            <person name="Sheng H.-H."/>
            <person name="Yin H.-F."/>
            <person name="Zhang Y."/>
            <person name="Zhu G.-F."/>
            <person name="Wan M."/>
            <person name="Huang H.-L."/>
            <person name="Qian Z."/>
            <person name="Wang S.-Y."/>
            <person name="Ma W."/>
            <person name="Yao Z.-J."/>
            <person name="Shen Y."/>
            <person name="Qiang B.-Q."/>
            <person name="Xia Q.-C."/>
            <person name="Guo X.-K."/>
            <person name="Danchin A."/>
            <person name="Saint Girons I."/>
            <person name="Somerville R.L."/>
            <person name="Wen Y.-M."/>
            <person name="Shi M.-H."/>
            <person name="Chen Z."/>
            <person name="Xu J.-G."/>
            <person name="Zhao G.-P."/>
        </authorList>
    </citation>
    <scope>NUCLEOTIDE SEQUENCE [LARGE SCALE GENOMIC DNA]</scope>
    <source>
        <strain>56601</strain>
    </source>
</reference>
<evidence type="ECO:0000255" key="1">
    <source>
        <dbReference type="HAMAP-Rule" id="MF_01694"/>
    </source>
</evidence>
<evidence type="ECO:0000255" key="2">
    <source>
        <dbReference type="PROSITE-ProRule" id="PRU01266"/>
    </source>
</evidence>